<sequence length="389" mass="43051">MTLRSLILEMRSRPHRVVHDLAAAAAADSTSVSSQDYRWSEIPEELLREILIRVEAADGGGWPSRRSVVACAGVCRGWRLLMNETVVVPEISSKLTFPISLKQPGPRDSLVQCFIKRNRITQSYHLYLGLTNSLTDDGKFLLAACKLKHTTCTDYIISLRSDDMSRRSQAYVGKVRSNFLGTKFTVFDGNLLPSTGAAKLRKSRSYNPAKVSAKVPLGSYPVAHITYELNVLGSRGPRKMQCLMDTIPTSTMEPQGVASEPSEFPLLGTRSTLSRSQSKPLRSSSSHLKETPLVLSNKTPRWHEQLRCWCLNFHGRVTVASVKNFQLVAAGASCGSGTGMSPERQSERIILQFGKVGKDMFTMDYGYPISAFQAFAICLSSFETRIACE</sequence>
<feature type="chain" id="PRO_0000272239" description="Tubby-like F-box protein 11">
    <location>
        <begin position="1"/>
        <end position="389"/>
    </location>
</feature>
<feature type="domain" description="F-box" evidence="1">
    <location>
        <begin position="36"/>
        <end position="82"/>
    </location>
</feature>
<feature type="region of interest" description="Disordered" evidence="2">
    <location>
        <begin position="250"/>
        <end position="289"/>
    </location>
</feature>
<feature type="compositionally biased region" description="Low complexity" evidence="2">
    <location>
        <begin position="273"/>
        <end position="286"/>
    </location>
</feature>
<proteinExistence type="evidence at transcript level"/>
<protein>
    <recommendedName>
        <fullName evidence="4">Tubby-like F-box protein 11</fullName>
        <shortName evidence="4">AtTLP11</shortName>
    </recommendedName>
</protein>
<dbReference type="EMBL" id="AC051627">
    <property type="status" value="NOT_ANNOTATED_CDS"/>
    <property type="molecule type" value="Genomic_DNA"/>
</dbReference>
<dbReference type="EMBL" id="CP002688">
    <property type="protein sequence ID" value="AED92598.1"/>
    <property type="molecule type" value="Genomic_DNA"/>
</dbReference>
<dbReference type="EMBL" id="BT010768">
    <property type="protein sequence ID" value="AAR23738.1"/>
    <property type="molecule type" value="mRNA"/>
</dbReference>
<dbReference type="EMBL" id="BT020601">
    <property type="protein sequence ID" value="AAW80874.1"/>
    <property type="molecule type" value="mRNA"/>
</dbReference>
<dbReference type="EMBL" id="AY046922">
    <property type="protein sequence ID" value="AAL03978.1"/>
    <property type="molecule type" value="mRNA"/>
</dbReference>
<dbReference type="RefSeq" id="NP_197369.2">
    <property type="nucleotide sequence ID" value="NM_121873.4"/>
</dbReference>
<dbReference type="SMR" id="Q6NPQ1"/>
<dbReference type="BioGRID" id="17262">
    <property type="interactions" value="5"/>
</dbReference>
<dbReference type="FunCoup" id="Q6NPQ1">
    <property type="interactions" value="466"/>
</dbReference>
<dbReference type="IntAct" id="Q6NPQ1">
    <property type="interactions" value="2"/>
</dbReference>
<dbReference type="STRING" id="3702.Q6NPQ1"/>
<dbReference type="iPTMnet" id="Q6NPQ1"/>
<dbReference type="PaxDb" id="3702-AT5G18680.1"/>
<dbReference type="ProteomicsDB" id="234615"/>
<dbReference type="EnsemblPlants" id="AT5G18680.1">
    <property type="protein sequence ID" value="AT5G18680.1"/>
    <property type="gene ID" value="AT5G18680"/>
</dbReference>
<dbReference type="GeneID" id="831986"/>
<dbReference type="Gramene" id="AT5G18680.1">
    <property type="protein sequence ID" value="AT5G18680.1"/>
    <property type="gene ID" value="AT5G18680"/>
</dbReference>
<dbReference type="KEGG" id="ath:AT5G18680"/>
<dbReference type="Araport" id="AT5G18680"/>
<dbReference type="TAIR" id="AT5G18680">
    <property type="gene designation" value="TLP11"/>
</dbReference>
<dbReference type="eggNOG" id="KOG2502">
    <property type="taxonomic scope" value="Eukaryota"/>
</dbReference>
<dbReference type="HOGENOM" id="CLU_028236_3_0_1"/>
<dbReference type="InParanoid" id="Q6NPQ1"/>
<dbReference type="OrthoDB" id="8775810at2759"/>
<dbReference type="PhylomeDB" id="Q6NPQ1"/>
<dbReference type="PRO" id="PR:Q6NPQ1"/>
<dbReference type="Proteomes" id="UP000006548">
    <property type="component" value="Chromosome 5"/>
</dbReference>
<dbReference type="ExpressionAtlas" id="Q6NPQ1">
    <property type="expression patterns" value="baseline and differential"/>
</dbReference>
<dbReference type="GO" id="GO:0005886">
    <property type="term" value="C:plasma membrane"/>
    <property type="evidence" value="ECO:0000314"/>
    <property type="project" value="TAIR"/>
</dbReference>
<dbReference type="GO" id="GO:0006355">
    <property type="term" value="P:regulation of DNA-templated transcription"/>
    <property type="evidence" value="ECO:0000304"/>
    <property type="project" value="TAIR"/>
</dbReference>
<dbReference type="CDD" id="cd22153">
    <property type="entry name" value="F-box_AtTLP-like"/>
    <property type="match status" value="1"/>
</dbReference>
<dbReference type="FunFam" id="3.20.90.10:FF:000003">
    <property type="entry name" value="Tubby-like F-box protein"/>
    <property type="match status" value="1"/>
</dbReference>
<dbReference type="Gene3D" id="3.20.90.10">
    <property type="entry name" value="Tubby Protein, Chain A"/>
    <property type="match status" value="1"/>
</dbReference>
<dbReference type="InterPro" id="IPR036047">
    <property type="entry name" value="F-box-like_dom_sf"/>
</dbReference>
<dbReference type="InterPro" id="IPR025659">
    <property type="entry name" value="Tubby-like_C"/>
</dbReference>
<dbReference type="InterPro" id="IPR000007">
    <property type="entry name" value="Tubby_C"/>
</dbReference>
<dbReference type="InterPro" id="IPR018066">
    <property type="entry name" value="Tubby_C_CS"/>
</dbReference>
<dbReference type="PANTHER" id="PTHR16517:SF99">
    <property type="entry name" value="TUBBY-LIKE F-BOX PROTEIN 11"/>
    <property type="match status" value="1"/>
</dbReference>
<dbReference type="PANTHER" id="PTHR16517">
    <property type="entry name" value="TUBBY-RELATED"/>
    <property type="match status" value="1"/>
</dbReference>
<dbReference type="Pfam" id="PF01167">
    <property type="entry name" value="Tub"/>
    <property type="match status" value="1"/>
</dbReference>
<dbReference type="PRINTS" id="PR01573">
    <property type="entry name" value="SUPERTUBBY"/>
</dbReference>
<dbReference type="SUPFAM" id="SSF81383">
    <property type="entry name" value="F-box domain"/>
    <property type="match status" value="1"/>
</dbReference>
<dbReference type="SUPFAM" id="SSF54518">
    <property type="entry name" value="Tubby C-terminal domain-like"/>
    <property type="match status" value="1"/>
</dbReference>
<dbReference type="PROSITE" id="PS01200">
    <property type="entry name" value="TUB_1"/>
    <property type="match status" value="1"/>
</dbReference>
<gene>
    <name evidence="5" type="primary">TULP11</name>
    <name evidence="4" type="synonym">TLP11</name>
    <name evidence="6" type="ordered locus">At5g18680</name>
    <name evidence="7" type="ORF">T1A4.60</name>
</gene>
<comment type="tissue specificity">
    <text evidence="3">Ubiquitous.</text>
</comment>
<comment type="similarity">
    <text evidence="5">Belongs to the TUB family.</text>
</comment>
<keyword id="KW-1185">Reference proteome</keyword>
<accession>Q6NPQ1</accession>
<accession>Q6YNX7</accession>
<name>TLP11_ARATH</name>
<evidence type="ECO:0000255" key="1">
    <source>
        <dbReference type="PROSITE-ProRule" id="PRU00080"/>
    </source>
</evidence>
<evidence type="ECO:0000256" key="2">
    <source>
        <dbReference type="SAM" id="MobiDB-lite"/>
    </source>
</evidence>
<evidence type="ECO:0000269" key="3">
    <source>
    </source>
</evidence>
<evidence type="ECO:0000303" key="4">
    <source>
    </source>
</evidence>
<evidence type="ECO:0000305" key="5"/>
<evidence type="ECO:0000312" key="6">
    <source>
        <dbReference type="Araport" id="AT5G18680"/>
    </source>
</evidence>
<evidence type="ECO:0000312" key="7">
    <source>
        <dbReference type="EMBL" id="AC051627"/>
    </source>
</evidence>
<organism>
    <name type="scientific">Arabidopsis thaliana</name>
    <name type="common">Mouse-ear cress</name>
    <dbReference type="NCBI Taxonomy" id="3702"/>
    <lineage>
        <taxon>Eukaryota</taxon>
        <taxon>Viridiplantae</taxon>
        <taxon>Streptophyta</taxon>
        <taxon>Embryophyta</taxon>
        <taxon>Tracheophyta</taxon>
        <taxon>Spermatophyta</taxon>
        <taxon>Magnoliopsida</taxon>
        <taxon>eudicotyledons</taxon>
        <taxon>Gunneridae</taxon>
        <taxon>Pentapetalae</taxon>
        <taxon>rosids</taxon>
        <taxon>malvids</taxon>
        <taxon>Brassicales</taxon>
        <taxon>Brassicaceae</taxon>
        <taxon>Camelineae</taxon>
        <taxon>Arabidopsis</taxon>
    </lineage>
</organism>
<reference key="1">
    <citation type="journal article" date="2000" name="Nature">
        <title>Sequence and analysis of chromosome 5 of the plant Arabidopsis thaliana.</title>
        <authorList>
            <person name="Tabata S."/>
            <person name="Kaneko T."/>
            <person name="Nakamura Y."/>
            <person name="Kotani H."/>
            <person name="Kato T."/>
            <person name="Asamizu E."/>
            <person name="Miyajima N."/>
            <person name="Sasamoto S."/>
            <person name="Kimura T."/>
            <person name="Hosouchi T."/>
            <person name="Kawashima K."/>
            <person name="Kohara M."/>
            <person name="Matsumoto M."/>
            <person name="Matsuno A."/>
            <person name="Muraki A."/>
            <person name="Nakayama S."/>
            <person name="Nakazaki N."/>
            <person name="Naruo K."/>
            <person name="Okumura S."/>
            <person name="Shinpo S."/>
            <person name="Takeuchi C."/>
            <person name="Wada T."/>
            <person name="Watanabe A."/>
            <person name="Yamada M."/>
            <person name="Yasuda M."/>
            <person name="Sato S."/>
            <person name="de la Bastide M."/>
            <person name="Huang E."/>
            <person name="Spiegel L."/>
            <person name="Gnoj L."/>
            <person name="O'Shaughnessy A."/>
            <person name="Preston R."/>
            <person name="Habermann K."/>
            <person name="Murray J."/>
            <person name="Johnson D."/>
            <person name="Rohlfing T."/>
            <person name="Nelson J."/>
            <person name="Stoneking T."/>
            <person name="Pepin K."/>
            <person name="Spieth J."/>
            <person name="Sekhon M."/>
            <person name="Armstrong J."/>
            <person name="Becker M."/>
            <person name="Belter E."/>
            <person name="Cordum H."/>
            <person name="Cordes M."/>
            <person name="Courtney L."/>
            <person name="Courtney W."/>
            <person name="Dante M."/>
            <person name="Du H."/>
            <person name="Edwards J."/>
            <person name="Fryman J."/>
            <person name="Haakensen B."/>
            <person name="Lamar E."/>
            <person name="Latreille P."/>
            <person name="Leonard S."/>
            <person name="Meyer R."/>
            <person name="Mulvaney E."/>
            <person name="Ozersky P."/>
            <person name="Riley A."/>
            <person name="Strowmatt C."/>
            <person name="Wagner-McPherson C."/>
            <person name="Wollam A."/>
            <person name="Yoakum M."/>
            <person name="Bell M."/>
            <person name="Dedhia N."/>
            <person name="Parnell L."/>
            <person name="Shah R."/>
            <person name="Rodriguez M."/>
            <person name="Hoon See L."/>
            <person name="Vil D."/>
            <person name="Baker J."/>
            <person name="Kirchoff K."/>
            <person name="Toth K."/>
            <person name="King L."/>
            <person name="Bahret A."/>
            <person name="Miller B."/>
            <person name="Marra M.A."/>
            <person name="Martienssen R."/>
            <person name="McCombie W.R."/>
            <person name="Wilson R.K."/>
            <person name="Murphy G."/>
            <person name="Bancroft I."/>
            <person name="Volckaert G."/>
            <person name="Wambutt R."/>
            <person name="Duesterhoeft A."/>
            <person name="Stiekema W."/>
            <person name="Pohl T."/>
            <person name="Entian K.-D."/>
            <person name="Terryn N."/>
            <person name="Hartley N."/>
            <person name="Bent E."/>
            <person name="Johnson S."/>
            <person name="Langham S.-A."/>
            <person name="McCullagh B."/>
            <person name="Robben J."/>
            <person name="Grymonprez B."/>
            <person name="Zimmermann W."/>
            <person name="Ramsperger U."/>
            <person name="Wedler H."/>
            <person name="Balke K."/>
            <person name="Wedler E."/>
            <person name="Peters S."/>
            <person name="van Staveren M."/>
            <person name="Dirkse W."/>
            <person name="Mooijman P."/>
            <person name="Klein Lankhorst R."/>
            <person name="Weitzenegger T."/>
            <person name="Bothe G."/>
            <person name="Rose M."/>
            <person name="Hauf J."/>
            <person name="Berneiser S."/>
            <person name="Hempel S."/>
            <person name="Feldpausch M."/>
            <person name="Lamberth S."/>
            <person name="Villarroel R."/>
            <person name="Gielen J."/>
            <person name="Ardiles W."/>
            <person name="Bents O."/>
            <person name="Lemcke K."/>
            <person name="Kolesov G."/>
            <person name="Mayer K.F.X."/>
            <person name="Rudd S."/>
            <person name="Schoof H."/>
            <person name="Schueller C."/>
            <person name="Zaccaria P."/>
            <person name="Mewes H.-W."/>
            <person name="Bevan M."/>
            <person name="Fransz P.F."/>
        </authorList>
    </citation>
    <scope>NUCLEOTIDE SEQUENCE [LARGE SCALE GENOMIC DNA]</scope>
    <source>
        <strain>cv. Columbia</strain>
    </source>
</reference>
<reference key="2">
    <citation type="journal article" date="2017" name="Plant J.">
        <title>Araport11: a complete reannotation of the Arabidopsis thaliana reference genome.</title>
        <authorList>
            <person name="Cheng C.Y."/>
            <person name="Krishnakumar V."/>
            <person name="Chan A.P."/>
            <person name="Thibaud-Nissen F."/>
            <person name="Schobel S."/>
            <person name="Town C.D."/>
        </authorList>
    </citation>
    <scope>GENOME REANNOTATION</scope>
    <source>
        <strain>cv. Columbia</strain>
    </source>
</reference>
<reference key="3">
    <citation type="submission" date="2005-02" db="EMBL/GenBank/DDBJ databases">
        <title>Arabidopsis ORF clones.</title>
        <authorList>
            <person name="Kim C.J."/>
            <person name="Chen H."/>
            <person name="Cheuk R.F."/>
            <person name="Shinn P."/>
            <person name="Ecker J.R."/>
        </authorList>
    </citation>
    <scope>NUCLEOTIDE SEQUENCE [LARGE SCALE MRNA]</scope>
    <source>
        <strain>cv. Columbia</strain>
    </source>
</reference>
<reference key="4">
    <citation type="journal article" date="2004" name="Plant Physiol.">
        <title>Molecular analyses of the Arabidopsis TUBBY-like protein gene family.</title>
        <authorList>
            <person name="Lai C.-P."/>
            <person name="Lee C.-L."/>
            <person name="Chen P.-H."/>
            <person name="Wu S.-H."/>
            <person name="Yang C.-C."/>
            <person name="Shaw J.-F."/>
        </authorList>
    </citation>
    <scope>NUCLEOTIDE SEQUENCE [MRNA] OF 10-389</scope>
    <scope>TISSUE SPECIFICITY</scope>
    <scope>GENE FAMILY</scope>
    <scope>NOMENCLATURE</scope>
</reference>